<proteinExistence type="inferred from homology"/>
<protein>
    <recommendedName>
        <fullName evidence="1">UDP-N-acetylenolpyruvoylglucosamine reductase</fullName>
        <ecNumber evidence="1">1.3.1.98</ecNumber>
    </recommendedName>
    <alternativeName>
        <fullName evidence="1">UDP-N-acetylmuramate dehydrogenase</fullName>
    </alternativeName>
</protein>
<sequence length="309" mass="32740">MTAHSLIDAIRAAAPDLRGRLLENQSLADLTWFRVGGPAQVLFSPADEADLSAFLAALDPSVPVTVIGLGSNLIVRDGGIPGVTIRLGGKAFGSVEIDGETIRSGTAVPDMRLAKAAAEASLDGLAFFRGIPGSVGGALRMNAGAHGGETTDVLVEVRGIDRKGEVHRFTHAEMGFRYRHSSAPDDVIFTGATFRGRPGDREAIEAEMERVTAAREAAQPIRERTGGSTFKNPEGGKAWQLIDAAGCRGLIRGGAQVSEMHCNFLINRGGATAADIEGLGEEVRRRVREHSGFELHWEIKRIGVEASPA</sequence>
<comment type="function">
    <text evidence="1">Cell wall formation.</text>
</comment>
<comment type="catalytic activity">
    <reaction evidence="1">
        <text>UDP-N-acetyl-alpha-D-muramate + NADP(+) = UDP-N-acetyl-3-O-(1-carboxyvinyl)-alpha-D-glucosamine + NADPH + H(+)</text>
        <dbReference type="Rhea" id="RHEA:12248"/>
        <dbReference type="ChEBI" id="CHEBI:15378"/>
        <dbReference type="ChEBI" id="CHEBI:57783"/>
        <dbReference type="ChEBI" id="CHEBI:58349"/>
        <dbReference type="ChEBI" id="CHEBI:68483"/>
        <dbReference type="ChEBI" id="CHEBI:70757"/>
        <dbReference type="EC" id="1.3.1.98"/>
    </reaction>
</comment>
<comment type="cofactor">
    <cofactor evidence="1">
        <name>FAD</name>
        <dbReference type="ChEBI" id="CHEBI:57692"/>
    </cofactor>
</comment>
<comment type="pathway">
    <text evidence="1">Cell wall biogenesis; peptidoglycan biosynthesis.</text>
</comment>
<comment type="subcellular location">
    <subcellularLocation>
        <location evidence="1">Cytoplasm</location>
    </subcellularLocation>
</comment>
<comment type="similarity">
    <text evidence="1">Belongs to the MurB family.</text>
</comment>
<dbReference type="EC" id="1.3.1.98" evidence="1"/>
<dbReference type="EMBL" id="CP001298">
    <property type="protein sequence ID" value="ACK84010.1"/>
    <property type="molecule type" value="Genomic_DNA"/>
</dbReference>
<dbReference type="RefSeq" id="WP_015951360.1">
    <property type="nucleotide sequence ID" value="NC_011757.1"/>
</dbReference>
<dbReference type="SMR" id="B7KSC5"/>
<dbReference type="KEGG" id="mch:Mchl_3172"/>
<dbReference type="HOGENOM" id="CLU_035304_1_0_5"/>
<dbReference type="UniPathway" id="UPA00219"/>
<dbReference type="Proteomes" id="UP000002385">
    <property type="component" value="Chromosome"/>
</dbReference>
<dbReference type="GO" id="GO:0005829">
    <property type="term" value="C:cytosol"/>
    <property type="evidence" value="ECO:0007669"/>
    <property type="project" value="TreeGrafter"/>
</dbReference>
<dbReference type="GO" id="GO:0071949">
    <property type="term" value="F:FAD binding"/>
    <property type="evidence" value="ECO:0007669"/>
    <property type="project" value="InterPro"/>
</dbReference>
<dbReference type="GO" id="GO:0008762">
    <property type="term" value="F:UDP-N-acetylmuramate dehydrogenase activity"/>
    <property type="evidence" value="ECO:0007669"/>
    <property type="project" value="UniProtKB-UniRule"/>
</dbReference>
<dbReference type="GO" id="GO:0051301">
    <property type="term" value="P:cell division"/>
    <property type="evidence" value="ECO:0007669"/>
    <property type="project" value="UniProtKB-KW"/>
</dbReference>
<dbReference type="GO" id="GO:0071555">
    <property type="term" value="P:cell wall organization"/>
    <property type="evidence" value="ECO:0007669"/>
    <property type="project" value="UniProtKB-KW"/>
</dbReference>
<dbReference type="GO" id="GO:0009252">
    <property type="term" value="P:peptidoglycan biosynthetic process"/>
    <property type="evidence" value="ECO:0007669"/>
    <property type="project" value="UniProtKB-UniRule"/>
</dbReference>
<dbReference type="GO" id="GO:0008360">
    <property type="term" value="P:regulation of cell shape"/>
    <property type="evidence" value="ECO:0007669"/>
    <property type="project" value="UniProtKB-KW"/>
</dbReference>
<dbReference type="Gene3D" id="3.30.465.10">
    <property type="match status" value="1"/>
</dbReference>
<dbReference type="Gene3D" id="3.90.78.10">
    <property type="entry name" value="UDP-N-acetylenolpyruvoylglucosamine reductase, C-terminal domain"/>
    <property type="match status" value="1"/>
</dbReference>
<dbReference type="Gene3D" id="3.30.43.10">
    <property type="entry name" value="Uridine Diphospho-n-acetylenolpyruvylglucosamine Reductase, domain 2"/>
    <property type="match status" value="1"/>
</dbReference>
<dbReference type="HAMAP" id="MF_00037">
    <property type="entry name" value="MurB"/>
    <property type="match status" value="1"/>
</dbReference>
<dbReference type="InterPro" id="IPR016166">
    <property type="entry name" value="FAD-bd_PCMH"/>
</dbReference>
<dbReference type="InterPro" id="IPR036318">
    <property type="entry name" value="FAD-bd_PCMH-like_sf"/>
</dbReference>
<dbReference type="InterPro" id="IPR016167">
    <property type="entry name" value="FAD-bd_PCMH_sub1"/>
</dbReference>
<dbReference type="InterPro" id="IPR016169">
    <property type="entry name" value="FAD-bd_PCMH_sub2"/>
</dbReference>
<dbReference type="InterPro" id="IPR003170">
    <property type="entry name" value="MurB"/>
</dbReference>
<dbReference type="InterPro" id="IPR011601">
    <property type="entry name" value="MurB_C"/>
</dbReference>
<dbReference type="InterPro" id="IPR036635">
    <property type="entry name" value="MurB_C_sf"/>
</dbReference>
<dbReference type="InterPro" id="IPR006094">
    <property type="entry name" value="Oxid_FAD_bind_N"/>
</dbReference>
<dbReference type="NCBIfam" id="TIGR00179">
    <property type="entry name" value="murB"/>
    <property type="match status" value="1"/>
</dbReference>
<dbReference type="NCBIfam" id="NF010480">
    <property type="entry name" value="PRK13905.1"/>
    <property type="match status" value="1"/>
</dbReference>
<dbReference type="PANTHER" id="PTHR21071">
    <property type="entry name" value="UDP-N-ACETYLENOLPYRUVOYLGLUCOSAMINE REDUCTASE"/>
    <property type="match status" value="1"/>
</dbReference>
<dbReference type="PANTHER" id="PTHR21071:SF4">
    <property type="entry name" value="UDP-N-ACETYLENOLPYRUVOYLGLUCOSAMINE REDUCTASE"/>
    <property type="match status" value="1"/>
</dbReference>
<dbReference type="Pfam" id="PF01565">
    <property type="entry name" value="FAD_binding_4"/>
    <property type="match status" value="1"/>
</dbReference>
<dbReference type="Pfam" id="PF02873">
    <property type="entry name" value="MurB_C"/>
    <property type="match status" value="1"/>
</dbReference>
<dbReference type="SUPFAM" id="SSF56176">
    <property type="entry name" value="FAD-binding/transporter-associated domain-like"/>
    <property type="match status" value="1"/>
</dbReference>
<dbReference type="SUPFAM" id="SSF56194">
    <property type="entry name" value="Uridine diphospho-N-Acetylenolpyruvylglucosamine reductase, MurB, C-terminal domain"/>
    <property type="match status" value="1"/>
</dbReference>
<dbReference type="PROSITE" id="PS51387">
    <property type="entry name" value="FAD_PCMH"/>
    <property type="match status" value="1"/>
</dbReference>
<keyword id="KW-0131">Cell cycle</keyword>
<keyword id="KW-0132">Cell division</keyword>
<keyword id="KW-0133">Cell shape</keyword>
<keyword id="KW-0961">Cell wall biogenesis/degradation</keyword>
<keyword id="KW-0963">Cytoplasm</keyword>
<keyword id="KW-0274">FAD</keyword>
<keyword id="KW-0285">Flavoprotein</keyword>
<keyword id="KW-0521">NADP</keyword>
<keyword id="KW-0560">Oxidoreductase</keyword>
<keyword id="KW-0573">Peptidoglycan synthesis</keyword>
<accession>B7KSC5</accession>
<organism>
    <name type="scientific">Methylorubrum extorquens (strain CM4 / NCIMB 13688)</name>
    <name type="common">Methylobacterium extorquens</name>
    <dbReference type="NCBI Taxonomy" id="440085"/>
    <lineage>
        <taxon>Bacteria</taxon>
        <taxon>Pseudomonadati</taxon>
        <taxon>Pseudomonadota</taxon>
        <taxon>Alphaproteobacteria</taxon>
        <taxon>Hyphomicrobiales</taxon>
        <taxon>Methylobacteriaceae</taxon>
        <taxon>Methylorubrum</taxon>
    </lineage>
</organism>
<feature type="chain" id="PRO_1000191430" description="UDP-N-acetylenolpyruvoylglucosamine reductase">
    <location>
        <begin position="1"/>
        <end position="309"/>
    </location>
</feature>
<feature type="domain" description="FAD-binding PCMH-type" evidence="1">
    <location>
        <begin position="34"/>
        <end position="221"/>
    </location>
</feature>
<feature type="active site" evidence="1">
    <location>
        <position position="179"/>
    </location>
</feature>
<feature type="active site" description="Proton donor" evidence="1">
    <location>
        <position position="228"/>
    </location>
</feature>
<feature type="active site" evidence="1">
    <location>
        <position position="298"/>
    </location>
</feature>
<name>MURB_METC4</name>
<evidence type="ECO:0000255" key="1">
    <source>
        <dbReference type="HAMAP-Rule" id="MF_00037"/>
    </source>
</evidence>
<reference key="1">
    <citation type="submission" date="2008-12" db="EMBL/GenBank/DDBJ databases">
        <title>Complete sequence of chromosome of Methylobacterium chloromethanicum CM4.</title>
        <authorList>
            <consortium name="US DOE Joint Genome Institute"/>
            <person name="Lucas S."/>
            <person name="Copeland A."/>
            <person name="Lapidus A."/>
            <person name="Glavina del Rio T."/>
            <person name="Dalin E."/>
            <person name="Tice H."/>
            <person name="Bruce D."/>
            <person name="Goodwin L."/>
            <person name="Pitluck S."/>
            <person name="Chertkov O."/>
            <person name="Brettin T."/>
            <person name="Detter J.C."/>
            <person name="Han C."/>
            <person name="Larimer F."/>
            <person name="Land M."/>
            <person name="Hauser L."/>
            <person name="Kyrpides N."/>
            <person name="Mikhailova N."/>
            <person name="Marx C."/>
            <person name="Richardson P."/>
        </authorList>
    </citation>
    <scope>NUCLEOTIDE SEQUENCE [LARGE SCALE GENOMIC DNA]</scope>
    <source>
        <strain>CM4 / NCIMB 13688</strain>
    </source>
</reference>
<gene>
    <name evidence="1" type="primary">murB</name>
    <name type="ordered locus">Mchl_3172</name>
</gene>